<gene>
    <name evidence="1" type="primary">atpA</name>
    <name type="ordered locus">MAG3540</name>
</gene>
<keyword id="KW-0066">ATP synthesis</keyword>
<keyword id="KW-0067">ATP-binding</keyword>
<keyword id="KW-1003">Cell membrane</keyword>
<keyword id="KW-0139">CF(1)</keyword>
<keyword id="KW-0375">Hydrogen ion transport</keyword>
<keyword id="KW-0406">Ion transport</keyword>
<keyword id="KW-0472">Membrane</keyword>
<keyword id="KW-0547">Nucleotide-binding</keyword>
<keyword id="KW-1185">Reference proteome</keyword>
<keyword id="KW-1278">Translocase</keyword>
<keyword id="KW-0813">Transport</keyword>
<name>ATPA_MYCAP</name>
<evidence type="ECO:0000255" key="1">
    <source>
        <dbReference type="HAMAP-Rule" id="MF_01346"/>
    </source>
</evidence>
<feature type="chain" id="PRO_1000143412" description="ATP synthase subunit alpha">
    <location>
        <begin position="1"/>
        <end position="528"/>
    </location>
</feature>
<feature type="binding site" evidence="1">
    <location>
        <begin position="169"/>
        <end position="176"/>
    </location>
    <ligand>
        <name>ATP</name>
        <dbReference type="ChEBI" id="CHEBI:30616"/>
    </ligand>
</feature>
<feature type="site" description="Required for activity" evidence="1">
    <location>
        <position position="362"/>
    </location>
</feature>
<organism>
    <name type="scientific">Mycoplasmopsis agalactiae (strain NCTC 10123 / CIP 59.7 / PG2)</name>
    <name type="common">Mycoplasma agalactiae</name>
    <dbReference type="NCBI Taxonomy" id="347257"/>
    <lineage>
        <taxon>Bacteria</taxon>
        <taxon>Bacillati</taxon>
        <taxon>Mycoplasmatota</taxon>
        <taxon>Mycoplasmoidales</taxon>
        <taxon>Metamycoplasmataceae</taxon>
        <taxon>Mycoplasmopsis</taxon>
    </lineage>
</organism>
<sequence>MASKSTDISAIIKDRIRRFDSKIDYSEIGYIVTIGDGIALVNGLDNAKNGEIVKFKNNITGLVLNLEEEVVGVAIFGDANMLSEADLCTRTGEVIAVPVGDELTGRVINAIGNPIDGKGPINSTKRREIFKVAPGVMSRVEVNEPLETGIIAIDSMIPIGKGQRELIIGDRQTGKTSIAIDTIINQKDKNVKCIYVAIGQKNSTVAQITKKLQDSGAMEYTTVIVSGASELAPQQYIAPYSGTAIAEEWMSEGKDCLIIYDDLSKHAIAYRTLSLLLRRPPGREAYPGDVFYLHSQLLERAAKVNYSYGGGSITALPIIETQQGDISAYIPTNVISITDGQIFTRENLFHSGQRPAVDVGFSVSRVGSSAQIKAMKEVSSSLKLELAQYNEMQAFAQFGSDLDDSTIAILKHGHKVYELLKQEQYYPINQLAQTAILLGVKEKIINPLPASQLRRYRDEVIKFMTKELEGIKIGEKIKQNNNALNSSIKEEITTHLVKIVNKIIASLHDYKPEAELPMPAKYLEINNV</sequence>
<dbReference type="EC" id="7.1.2.2" evidence="1"/>
<dbReference type="EMBL" id="CU179680">
    <property type="protein sequence ID" value="CAL59052.1"/>
    <property type="molecule type" value="Genomic_DNA"/>
</dbReference>
<dbReference type="RefSeq" id="WP_011949527.1">
    <property type="nucleotide sequence ID" value="NC_009497.1"/>
</dbReference>
<dbReference type="SMR" id="A5IYE3"/>
<dbReference type="STRING" id="347257.MAG3540"/>
<dbReference type="GeneID" id="93358112"/>
<dbReference type="KEGG" id="maa:MAG3540"/>
<dbReference type="HOGENOM" id="CLU_010091_2_1_14"/>
<dbReference type="Proteomes" id="UP000007065">
    <property type="component" value="Chromosome"/>
</dbReference>
<dbReference type="GO" id="GO:0005886">
    <property type="term" value="C:plasma membrane"/>
    <property type="evidence" value="ECO:0007669"/>
    <property type="project" value="UniProtKB-SubCell"/>
</dbReference>
<dbReference type="GO" id="GO:0045259">
    <property type="term" value="C:proton-transporting ATP synthase complex"/>
    <property type="evidence" value="ECO:0007669"/>
    <property type="project" value="UniProtKB-KW"/>
</dbReference>
<dbReference type="GO" id="GO:0043531">
    <property type="term" value="F:ADP binding"/>
    <property type="evidence" value="ECO:0007669"/>
    <property type="project" value="TreeGrafter"/>
</dbReference>
<dbReference type="GO" id="GO:0005524">
    <property type="term" value="F:ATP binding"/>
    <property type="evidence" value="ECO:0007669"/>
    <property type="project" value="UniProtKB-UniRule"/>
</dbReference>
<dbReference type="GO" id="GO:0046933">
    <property type="term" value="F:proton-transporting ATP synthase activity, rotational mechanism"/>
    <property type="evidence" value="ECO:0007669"/>
    <property type="project" value="UniProtKB-UniRule"/>
</dbReference>
<dbReference type="CDD" id="cd18113">
    <property type="entry name" value="ATP-synt_F1_alpha_C"/>
    <property type="match status" value="1"/>
</dbReference>
<dbReference type="CDD" id="cd18116">
    <property type="entry name" value="ATP-synt_F1_alpha_N"/>
    <property type="match status" value="1"/>
</dbReference>
<dbReference type="CDD" id="cd01132">
    <property type="entry name" value="F1-ATPase_alpha_CD"/>
    <property type="match status" value="1"/>
</dbReference>
<dbReference type="FunFam" id="3.40.50.300:FF:000002">
    <property type="entry name" value="ATP synthase subunit alpha"/>
    <property type="match status" value="1"/>
</dbReference>
<dbReference type="Gene3D" id="2.40.30.20">
    <property type="match status" value="1"/>
</dbReference>
<dbReference type="Gene3D" id="1.20.150.20">
    <property type="entry name" value="ATP synthase alpha/beta chain, C-terminal domain"/>
    <property type="match status" value="1"/>
</dbReference>
<dbReference type="Gene3D" id="3.40.50.300">
    <property type="entry name" value="P-loop containing nucleotide triphosphate hydrolases"/>
    <property type="match status" value="1"/>
</dbReference>
<dbReference type="HAMAP" id="MF_01346">
    <property type="entry name" value="ATP_synth_alpha_bact"/>
    <property type="match status" value="1"/>
</dbReference>
<dbReference type="InterPro" id="IPR023366">
    <property type="entry name" value="ATP_synth_asu-like_sf"/>
</dbReference>
<dbReference type="InterPro" id="IPR000793">
    <property type="entry name" value="ATP_synth_asu_C"/>
</dbReference>
<dbReference type="InterPro" id="IPR038376">
    <property type="entry name" value="ATP_synth_asu_C_sf"/>
</dbReference>
<dbReference type="InterPro" id="IPR033732">
    <property type="entry name" value="ATP_synth_F1_a_nt-bd_dom"/>
</dbReference>
<dbReference type="InterPro" id="IPR005294">
    <property type="entry name" value="ATP_synth_F1_asu"/>
</dbReference>
<dbReference type="InterPro" id="IPR020003">
    <property type="entry name" value="ATPase_a/bsu_AS"/>
</dbReference>
<dbReference type="InterPro" id="IPR004100">
    <property type="entry name" value="ATPase_F1/V1/A1_a/bsu_N"/>
</dbReference>
<dbReference type="InterPro" id="IPR036121">
    <property type="entry name" value="ATPase_F1/V1/A1_a/bsu_N_sf"/>
</dbReference>
<dbReference type="InterPro" id="IPR000194">
    <property type="entry name" value="ATPase_F1/V1/A1_a/bsu_nucl-bd"/>
</dbReference>
<dbReference type="InterPro" id="IPR027417">
    <property type="entry name" value="P-loop_NTPase"/>
</dbReference>
<dbReference type="NCBIfam" id="TIGR00962">
    <property type="entry name" value="atpA"/>
    <property type="match status" value="1"/>
</dbReference>
<dbReference type="NCBIfam" id="NF009884">
    <property type="entry name" value="PRK13343.1"/>
    <property type="match status" value="1"/>
</dbReference>
<dbReference type="PANTHER" id="PTHR48082">
    <property type="entry name" value="ATP SYNTHASE SUBUNIT ALPHA, MITOCHONDRIAL"/>
    <property type="match status" value="1"/>
</dbReference>
<dbReference type="PANTHER" id="PTHR48082:SF2">
    <property type="entry name" value="ATP SYNTHASE SUBUNIT ALPHA, MITOCHONDRIAL"/>
    <property type="match status" value="1"/>
</dbReference>
<dbReference type="Pfam" id="PF00006">
    <property type="entry name" value="ATP-synt_ab"/>
    <property type="match status" value="1"/>
</dbReference>
<dbReference type="Pfam" id="PF00306">
    <property type="entry name" value="ATP-synt_ab_C"/>
    <property type="match status" value="1"/>
</dbReference>
<dbReference type="Pfam" id="PF02874">
    <property type="entry name" value="ATP-synt_ab_N"/>
    <property type="match status" value="1"/>
</dbReference>
<dbReference type="SUPFAM" id="SSF47917">
    <property type="entry name" value="C-terminal domain of alpha and beta subunits of F1 ATP synthase"/>
    <property type="match status" value="1"/>
</dbReference>
<dbReference type="SUPFAM" id="SSF50615">
    <property type="entry name" value="N-terminal domain of alpha and beta subunits of F1 ATP synthase"/>
    <property type="match status" value="1"/>
</dbReference>
<dbReference type="SUPFAM" id="SSF52540">
    <property type="entry name" value="P-loop containing nucleoside triphosphate hydrolases"/>
    <property type="match status" value="1"/>
</dbReference>
<dbReference type="PROSITE" id="PS00152">
    <property type="entry name" value="ATPASE_ALPHA_BETA"/>
    <property type="match status" value="1"/>
</dbReference>
<protein>
    <recommendedName>
        <fullName evidence="1">ATP synthase subunit alpha</fullName>
        <ecNumber evidence="1">7.1.2.2</ecNumber>
    </recommendedName>
    <alternativeName>
        <fullName evidence="1">ATP synthase F1 sector subunit alpha</fullName>
    </alternativeName>
    <alternativeName>
        <fullName evidence="1">F-ATPase subunit alpha</fullName>
    </alternativeName>
</protein>
<comment type="function">
    <text evidence="1">Produces ATP from ADP in the presence of a proton gradient across the membrane. The alpha chain is a regulatory subunit.</text>
</comment>
<comment type="catalytic activity">
    <reaction evidence="1">
        <text>ATP + H2O + 4 H(+)(in) = ADP + phosphate + 5 H(+)(out)</text>
        <dbReference type="Rhea" id="RHEA:57720"/>
        <dbReference type="ChEBI" id="CHEBI:15377"/>
        <dbReference type="ChEBI" id="CHEBI:15378"/>
        <dbReference type="ChEBI" id="CHEBI:30616"/>
        <dbReference type="ChEBI" id="CHEBI:43474"/>
        <dbReference type="ChEBI" id="CHEBI:456216"/>
        <dbReference type="EC" id="7.1.2.2"/>
    </reaction>
</comment>
<comment type="subunit">
    <text evidence="1">F-type ATPases have 2 components, CF(1) - the catalytic core - and CF(0) - the membrane proton channel. CF(1) has five subunits: alpha(3), beta(3), gamma(1), delta(1), epsilon(1). CF(0) has three main subunits: a(1), b(2) and c(9-12). The alpha and beta chains form an alternating ring which encloses part of the gamma chain. CF(1) is attached to CF(0) by a central stalk formed by the gamma and epsilon chains, while a peripheral stalk is formed by the delta and b chains.</text>
</comment>
<comment type="subcellular location">
    <subcellularLocation>
        <location evidence="1">Cell membrane</location>
        <topology evidence="1">Peripheral membrane protein</topology>
    </subcellularLocation>
</comment>
<comment type="similarity">
    <text evidence="1">Belongs to the ATPase alpha/beta chains family.</text>
</comment>
<accession>A5IYE3</accession>
<proteinExistence type="inferred from homology"/>
<reference key="1">
    <citation type="journal article" date="2007" name="PLoS Genet.">
        <title>Being pathogenic, plastic, and sexual while living with a nearly minimal bacterial genome.</title>
        <authorList>
            <person name="Sirand-Pugnet P."/>
            <person name="Lartigue C."/>
            <person name="Marenda M."/>
            <person name="Jacob D."/>
            <person name="Barre A."/>
            <person name="Barbe V."/>
            <person name="Schenowitz C."/>
            <person name="Mangenot S."/>
            <person name="Couloux A."/>
            <person name="Segurens B."/>
            <person name="de Daruvar A."/>
            <person name="Blanchard A."/>
            <person name="Citti C."/>
        </authorList>
    </citation>
    <scope>NUCLEOTIDE SEQUENCE [LARGE SCALE GENOMIC DNA]</scope>
    <source>
        <strain>NCTC 10123 / CIP 59.7 / PG2</strain>
    </source>
</reference>